<evidence type="ECO:0000255" key="1">
    <source>
        <dbReference type="HAMAP-Rule" id="MF_01027"/>
    </source>
</evidence>
<keyword id="KW-0004">4Fe-4S</keyword>
<keyword id="KW-0028">Amino-acid biosynthesis</keyword>
<keyword id="KW-0100">Branched-chain amino acid biosynthesis</keyword>
<keyword id="KW-0408">Iron</keyword>
<keyword id="KW-0411">Iron-sulfur</keyword>
<keyword id="KW-0432">Leucine biosynthesis</keyword>
<keyword id="KW-0456">Lyase</keyword>
<keyword id="KW-0479">Metal-binding</keyword>
<keyword id="KW-1185">Reference proteome</keyword>
<reference key="1">
    <citation type="submission" date="2007-10" db="EMBL/GenBank/DDBJ databases">
        <title>Complete sequence of Desulfococcus oleovorans Hxd3.</title>
        <authorList>
            <consortium name="US DOE Joint Genome Institute"/>
            <person name="Copeland A."/>
            <person name="Lucas S."/>
            <person name="Lapidus A."/>
            <person name="Barry K."/>
            <person name="Glavina del Rio T."/>
            <person name="Dalin E."/>
            <person name="Tice H."/>
            <person name="Pitluck S."/>
            <person name="Kiss H."/>
            <person name="Brettin T."/>
            <person name="Bruce D."/>
            <person name="Detter J.C."/>
            <person name="Han C."/>
            <person name="Schmutz J."/>
            <person name="Larimer F."/>
            <person name="Land M."/>
            <person name="Hauser L."/>
            <person name="Kyrpides N."/>
            <person name="Kim E."/>
            <person name="Wawrik B."/>
            <person name="Richardson P."/>
        </authorList>
    </citation>
    <scope>NUCLEOTIDE SEQUENCE [LARGE SCALE GENOMIC DNA]</scope>
    <source>
        <strain>DSM 6200 / JCM 39069 / Hxd3</strain>
    </source>
</reference>
<name>LEUC_DESOH</name>
<feature type="chain" id="PRO_1000135729" description="3-isopropylmalate dehydratase large subunit">
    <location>
        <begin position="1"/>
        <end position="431"/>
    </location>
</feature>
<feature type="binding site" evidence="1">
    <location>
        <position position="308"/>
    </location>
    <ligand>
        <name>[4Fe-4S] cluster</name>
        <dbReference type="ChEBI" id="CHEBI:49883"/>
    </ligand>
</feature>
<feature type="binding site" evidence="1">
    <location>
        <position position="368"/>
    </location>
    <ligand>
        <name>[4Fe-4S] cluster</name>
        <dbReference type="ChEBI" id="CHEBI:49883"/>
    </ligand>
</feature>
<feature type="binding site" evidence="1">
    <location>
        <position position="371"/>
    </location>
    <ligand>
        <name>[4Fe-4S] cluster</name>
        <dbReference type="ChEBI" id="CHEBI:49883"/>
    </ligand>
</feature>
<dbReference type="EC" id="4.2.1.33" evidence="1"/>
<dbReference type="EMBL" id="CP000859">
    <property type="protein sequence ID" value="ABW68962.1"/>
    <property type="molecule type" value="Genomic_DNA"/>
</dbReference>
<dbReference type="RefSeq" id="WP_012176572.1">
    <property type="nucleotide sequence ID" value="NC_009943.1"/>
</dbReference>
<dbReference type="SMR" id="A9A043"/>
<dbReference type="STRING" id="96561.Dole_3159"/>
<dbReference type="KEGG" id="dol:Dole_3159"/>
<dbReference type="eggNOG" id="COG0065">
    <property type="taxonomic scope" value="Bacteria"/>
</dbReference>
<dbReference type="HOGENOM" id="CLU_006714_3_4_7"/>
<dbReference type="OrthoDB" id="9764318at2"/>
<dbReference type="UniPathway" id="UPA00048">
    <property type="reaction ID" value="UER00071"/>
</dbReference>
<dbReference type="Proteomes" id="UP000008561">
    <property type="component" value="Chromosome"/>
</dbReference>
<dbReference type="GO" id="GO:0003861">
    <property type="term" value="F:3-isopropylmalate dehydratase activity"/>
    <property type="evidence" value="ECO:0007669"/>
    <property type="project" value="UniProtKB-UniRule"/>
</dbReference>
<dbReference type="GO" id="GO:0051539">
    <property type="term" value="F:4 iron, 4 sulfur cluster binding"/>
    <property type="evidence" value="ECO:0007669"/>
    <property type="project" value="UniProtKB-KW"/>
</dbReference>
<dbReference type="GO" id="GO:0046872">
    <property type="term" value="F:metal ion binding"/>
    <property type="evidence" value="ECO:0007669"/>
    <property type="project" value="UniProtKB-KW"/>
</dbReference>
<dbReference type="GO" id="GO:0009098">
    <property type="term" value="P:L-leucine biosynthetic process"/>
    <property type="evidence" value="ECO:0007669"/>
    <property type="project" value="UniProtKB-UniRule"/>
</dbReference>
<dbReference type="CDD" id="cd01583">
    <property type="entry name" value="IPMI"/>
    <property type="match status" value="1"/>
</dbReference>
<dbReference type="Gene3D" id="3.30.499.10">
    <property type="entry name" value="Aconitase, domain 3"/>
    <property type="match status" value="2"/>
</dbReference>
<dbReference type="HAMAP" id="MF_01027">
    <property type="entry name" value="LeuC_type2"/>
    <property type="match status" value="1"/>
</dbReference>
<dbReference type="InterPro" id="IPR015931">
    <property type="entry name" value="Acnase/IPM_dHydase_lsu_aba_1/3"/>
</dbReference>
<dbReference type="InterPro" id="IPR001030">
    <property type="entry name" value="Acoase/IPM_deHydtase_lsu_aba"/>
</dbReference>
<dbReference type="InterPro" id="IPR018136">
    <property type="entry name" value="Aconitase_4Fe-4S_BS"/>
</dbReference>
<dbReference type="InterPro" id="IPR036008">
    <property type="entry name" value="Aconitase_4Fe-4S_dom"/>
</dbReference>
<dbReference type="InterPro" id="IPR011826">
    <property type="entry name" value="HAcnase/IPMdehydase_lsu_prok"/>
</dbReference>
<dbReference type="InterPro" id="IPR006251">
    <property type="entry name" value="Homoacnase/IPMdehydase_lsu"/>
</dbReference>
<dbReference type="InterPro" id="IPR050067">
    <property type="entry name" value="IPM_dehydratase_rel_enz"/>
</dbReference>
<dbReference type="InterPro" id="IPR033941">
    <property type="entry name" value="IPMI_cat"/>
</dbReference>
<dbReference type="NCBIfam" id="TIGR01343">
    <property type="entry name" value="hacA_fam"/>
    <property type="match status" value="1"/>
</dbReference>
<dbReference type="NCBIfam" id="TIGR02086">
    <property type="entry name" value="IPMI_arch"/>
    <property type="match status" value="1"/>
</dbReference>
<dbReference type="NCBIfam" id="NF001614">
    <property type="entry name" value="PRK00402.1"/>
    <property type="match status" value="1"/>
</dbReference>
<dbReference type="PANTHER" id="PTHR43822:SF16">
    <property type="entry name" value="3-ISOPROPYLMALATE DEHYDRATASE LARGE SUBUNIT 2"/>
    <property type="match status" value="1"/>
</dbReference>
<dbReference type="PANTHER" id="PTHR43822">
    <property type="entry name" value="HOMOACONITASE, MITOCHONDRIAL-RELATED"/>
    <property type="match status" value="1"/>
</dbReference>
<dbReference type="Pfam" id="PF00330">
    <property type="entry name" value="Aconitase"/>
    <property type="match status" value="2"/>
</dbReference>
<dbReference type="PRINTS" id="PR00415">
    <property type="entry name" value="ACONITASE"/>
</dbReference>
<dbReference type="SUPFAM" id="SSF53732">
    <property type="entry name" value="Aconitase iron-sulfur domain"/>
    <property type="match status" value="1"/>
</dbReference>
<dbReference type="PROSITE" id="PS00450">
    <property type="entry name" value="ACONITASE_1"/>
    <property type="match status" value="1"/>
</dbReference>
<dbReference type="PROSITE" id="PS01244">
    <property type="entry name" value="ACONITASE_2"/>
    <property type="match status" value="1"/>
</dbReference>
<sequence>MGKTIAQKIFDAHSVDQPFGEVHVIRLDGVFCHEITTPTAICDLMEKNKDRVFDPSKIKAVIDHVTPAKDSKTAAQGKILRQWARRHGIDGFFDIGRNGVCHALFPEQGFVRPGHTIIMGDSHTCTYGAFGAFAAGVGTTDLEVGILKGVCALNYPSTIKVVLNGKLSPGVYAKDVILAVIAELGVNGATNRVIEFTGPCVDAMSMEARMTLCNMAIEAGGTCGICYPDKTTVAYLWEFIKGEYPSRQAALKAFKKLVSDPDADYDRVLEMDISDLSPRVTYGYKPDCVKPVAEMEGTPIDQVYIGSCTNGRLEDLRVAAKVLKGKKVHPSVRGIVSPATPTVFQAALEEGLIATFMAAGFCVTNPTCGACLGMSNGVLAPGEVCLSTTNRNFNGRMGKGGMVHLASPATAAAGAIAGCITNSKLYKKRAE</sequence>
<organism>
    <name type="scientific">Desulfosudis oleivorans (strain DSM 6200 / JCM 39069 / Hxd3)</name>
    <name type="common">Desulfococcus oleovorans</name>
    <dbReference type="NCBI Taxonomy" id="96561"/>
    <lineage>
        <taxon>Bacteria</taxon>
        <taxon>Pseudomonadati</taxon>
        <taxon>Thermodesulfobacteriota</taxon>
        <taxon>Desulfobacteria</taxon>
        <taxon>Desulfobacterales</taxon>
        <taxon>Desulfosudaceae</taxon>
        <taxon>Desulfosudis</taxon>
    </lineage>
</organism>
<comment type="function">
    <text evidence="1">Catalyzes the isomerization between 2-isopropylmalate and 3-isopropylmalate, via the formation of 2-isopropylmaleate.</text>
</comment>
<comment type="catalytic activity">
    <reaction evidence="1">
        <text>(2R,3S)-3-isopropylmalate = (2S)-2-isopropylmalate</text>
        <dbReference type="Rhea" id="RHEA:32287"/>
        <dbReference type="ChEBI" id="CHEBI:1178"/>
        <dbReference type="ChEBI" id="CHEBI:35121"/>
        <dbReference type="EC" id="4.2.1.33"/>
    </reaction>
</comment>
<comment type="cofactor">
    <cofactor evidence="1">
        <name>[4Fe-4S] cluster</name>
        <dbReference type="ChEBI" id="CHEBI:49883"/>
    </cofactor>
    <text evidence="1">Binds 1 [4Fe-4S] cluster per subunit.</text>
</comment>
<comment type="pathway">
    <text evidence="1">Amino-acid biosynthesis; L-leucine biosynthesis; L-leucine from 3-methyl-2-oxobutanoate: step 2/4.</text>
</comment>
<comment type="subunit">
    <text evidence="1">Heterodimer of LeuC and LeuD.</text>
</comment>
<comment type="similarity">
    <text evidence="1">Belongs to the aconitase/IPM isomerase family. LeuC type 2 subfamily.</text>
</comment>
<protein>
    <recommendedName>
        <fullName evidence="1">3-isopropylmalate dehydratase large subunit</fullName>
        <ecNumber evidence="1">4.2.1.33</ecNumber>
    </recommendedName>
    <alternativeName>
        <fullName evidence="1">Alpha-IPM isomerase</fullName>
        <shortName evidence="1">IPMI</shortName>
    </alternativeName>
    <alternativeName>
        <fullName evidence="1">Isopropylmalate isomerase</fullName>
    </alternativeName>
</protein>
<gene>
    <name evidence="1" type="primary">leuC</name>
    <name type="ordered locus">Dole_3159</name>
</gene>
<proteinExistence type="inferred from homology"/>
<accession>A9A043</accession>